<gene>
    <name type="primary">env</name>
</gene>
<keyword id="KW-0325">Glycoprotein</keyword>
<keyword id="KW-0814">Transposable element</keyword>
<name>ENV2_DROME</name>
<proteinExistence type="predicted"/>
<dbReference type="EMBL" id="X03431">
    <property type="protein sequence ID" value="CAB57797.1"/>
    <property type="status" value="ALT_SEQ"/>
    <property type="molecule type" value="Genomic_DNA"/>
</dbReference>
<dbReference type="PIR" id="C24872">
    <property type="entry name" value="C24872"/>
</dbReference>
<dbReference type="GlyCosmos" id="P20829">
    <property type="glycosylation" value="7 sites, No reported glycans"/>
</dbReference>
<dbReference type="FlyBase" id="FBgn0027623">
    <property type="gene designation" value="297\env"/>
</dbReference>
<dbReference type="PRO" id="PR:P20829"/>
<dbReference type="InterPro" id="IPR012014">
    <property type="entry name" value="Retroelement_env"/>
</dbReference>
<dbReference type="PIRSF" id="PIRSF004631">
    <property type="entry name" value="Retroelement_env"/>
    <property type="match status" value="1"/>
</dbReference>
<sequence length="471" mass="55246">TLNFTGTWYPITLLFILITAVHGQQIQINNIDTNHGYLLFSDKPVQIPSSFEHHSLKINLTEIDIVVDYFEQRLRTDYHAPQINFLYNKIKRELARITLKHRNKRGFINIVGSGFKYLFGTLDENDRVEIQKKLEINVHNSVKLHELNDAIRLINDGMQKIQNYENNHTIIDSLLFELMQFTEYIEDLEMAMQLSRLGLFNPKLLNYDKLENVNSQNILNIKTSTWINYNDNQVLIISHIPIYLSLISTIKIIPYPDSNGYQLDYTDTQSYFEKENKVYNTENKEVKNECVTNIIKHLNPICNFKPVHTNEIIKYIEPNTIVTWNLTQTILNQNCQNSINKIKIEGNKMIRVTQCKIEINNINFSETLLEPEIDLTPLYTPLNITKIKIVKHNDIIEMISENNITLYIQMIIVIIALILLYSYLRYVSFKPFMMLYAKLKIRKNQNQNTPQQTEIEEIPFPTLYPSIPAQV</sequence>
<feature type="chain" id="PRO_0000086982" description="Retrovirus-related Env polyprotein from transposon 297">
    <location>
        <begin position="1"/>
        <end position="471"/>
    </location>
</feature>
<feature type="glycosylation site" description="N-linked (GlcNAc...) asparagine" evidence="1">
    <location>
        <position position="3"/>
    </location>
</feature>
<feature type="glycosylation site" description="N-linked (GlcNAc...) asparagine" evidence="1">
    <location>
        <position position="59"/>
    </location>
</feature>
<feature type="glycosylation site" description="N-linked (GlcNAc...) asparagine" evidence="1">
    <location>
        <position position="167"/>
    </location>
</feature>
<feature type="glycosylation site" description="N-linked (GlcNAc...) asparagine" evidence="1">
    <location>
        <position position="325"/>
    </location>
</feature>
<feature type="glycosylation site" description="N-linked (GlcNAc...) asparagine" evidence="1">
    <location>
        <position position="363"/>
    </location>
</feature>
<feature type="glycosylation site" description="N-linked (GlcNAc...) asparagine" evidence="1">
    <location>
        <position position="383"/>
    </location>
</feature>
<feature type="glycosylation site" description="N-linked (GlcNAc...) asparagine" evidence="1">
    <location>
        <position position="403"/>
    </location>
</feature>
<evidence type="ECO:0000255" key="1"/>
<accession>P20829</accession>
<protein>
    <recommendedName>
        <fullName>Retrovirus-related Env polyprotein from transposon 297</fullName>
    </recommendedName>
</protein>
<organism>
    <name type="scientific">Drosophila melanogaster</name>
    <name type="common">Fruit fly</name>
    <dbReference type="NCBI Taxonomy" id="7227"/>
    <lineage>
        <taxon>Eukaryota</taxon>
        <taxon>Metazoa</taxon>
        <taxon>Ecdysozoa</taxon>
        <taxon>Arthropoda</taxon>
        <taxon>Hexapoda</taxon>
        <taxon>Insecta</taxon>
        <taxon>Pterygota</taxon>
        <taxon>Neoptera</taxon>
        <taxon>Endopterygota</taxon>
        <taxon>Diptera</taxon>
        <taxon>Brachycera</taxon>
        <taxon>Muscomorpha</taxon>
        <taxon>Ephydroidea</taxon>
        <taxon>Drosophilidae</taxon>
        <taxon>Drosophila</taxon>
        <taxon>Sophophora</taxon>
    </lineage>
</organism>
<reference key="1">
    <citation type="journal article" date="1986" name="Eur. J. Biochem.">
        <title>Complete nucleotide sequence and genome organization of a Drosophila transposable genetic element, 297.</title>
        <authorList>
            <person name="Inouye S."/>
            <person name="Yuki S."/>
            <person name="Saigo K."/>
        </authorList>
    </citation>
    <scope>NUCLEOTIDE SEQUENCE [GENOMIC DNA]</scope>
</reference>